<dbReference type="EMBL" id="AE017355">
    <property type="protein sequence ID" value="AAT62400.1"/>
    <property type="status" value="ALT_INIT"/>
    <property type="molecule type" value="Genomic_DNA"/>
</dbReference>
<dbReference type="RefSeq" id="WP_000382683.1">
    <property type="nucleotide sequence ID" value="NC_005957.1"/>
</dbReference>
<dbReference type="RefSeq" id="YP_034870.1">
    <property type="nucleotide sequence ID" value="NC_005957.1"/>
</dbReference>
<dbReference type="KEGG" id="btk:BT9727_0523"/>
<dbReference type="PATRIC" id="fig|281309.8.peg.554"/>
<dbReference type="HOGENOM" id="CLU_191960_0_0_9"/>
<dbReference type="Proteomes" id="UP000001301">
    <property type="component" value="Chromosome"/>
</dbReference>
<dbReference type="GO" id="GO:0042601">
    <property type="term" value="C:endospore-forming forespore"/>
    <property type="evidence" value="ECO:0007669"/>
    <property type="project" value="InterPro"/>
</dbReference>
<dbReference type="GO" id="GO:0030436">
    <property type="term" value="P:asexual sporulation"/>
    <property type="evidence" value="ECO:0007669"/>
    <property type="project" value="UniProtKB-UniRule"/>
</dbReference>
<dbReference type="GO" id="GO:0030435">
    <property type="term" value="P:sporulation resulting in formation of a cellular spore"/>
    <property type="evidence" value="ECO:0007669"/>
    <property type="project" value="UniProtKB-KW"/>
</dbReference>
<dbReference type="HAMAP" id="MF_00667">
    <property type="entry name" value="SspH"/>
    <property type="match status" value="1"/>
</dbReference>
<dbReference type="InterPro" id="IPR012610">
    <property type="entry name" value="SASP_SspH"/>
</dbReference>
<dbReference type="NCBIfam" id="NF002451">
    <property type="entry name" value="PRK01625.1"/>
    <property type="match status" value="1"/>
</dbReference>
<dbReference type="NCBIfam" id="TIGR02861">
    <property type="entry name" value="SASP_H"/>
    <property type="match status" value="1"/>
</dbReference>
<dbReference type="Pfam" id="PF08141">
    <property type="entry name" value="SspH"/>
    <property type="match status" value="1"/>
</dbReference>
<organism>
    <name type="scientific">Bacillus thuringiensis subsp. konkukian (strain 97-27)</name>
    <dbReference type="NCBI Taxonomy" id="281309"/>
    <lineage>
        <taxon>Bacteria</taxon>
        <taxon>Bacillati</taxon>
        <taxon>Bacillota</taxon>
        <taxon>Bacilli</taxon>
        <taxon>Bacillales</taxon>
        <taxon>Bacillaceae</taxon>
        <taxon>Bacillus</taxon>
        <taxon>Bacillus cereus group</taxon>
    </lineage>
</organism>
<keyword id="KW-0749">Sporulation</keyword>
<reference key="1">
    <citation type="journal article" date="2006" name="J. Bacteriol.">
        <title>Pathogenomic sequence analysis of Bacillus cereus and Bacillus thuringiensis isolates closely related to Bacillus anthracis.</title>
        <authorList>
            <person name="Han C.S."/>
            <person name="Xie G."/>
            <person name="Challacombe J.F."/>
            <person name="Altherr M.R."/>
            <person name="Bhotika S.S."/>
            <person name="Bruce D."/>
            <person name="Campbell C.S."/>
            <person name="Campbell M.L."/>
            <person name="Chen J."/>
            <person name="Chertkov O."/>
            <person name="Cleland C."/>
            <person name="Dimitrijevic M."/>
            <person name="Doggett N.A."/>
            <person name="Fawcett J.J."/>
            <person name="Glavina T."/>
            <person name="Goodwin L.A."/>
            <person name="Hill K.K."/>
            <person name="Hitchcock P."/>
            <person name="Jackson P.J."/>
            <person name="Keim P."/>
            <person name="Kewalramani A.R."/>
            <person name="Longmire J."/>
            <person name="Lucas S."/>
            <person name="Malfatti S."/>
            <person name="McMurry K."/>
            <person name="Meincke L.J."/>
            <person name="Misra M."/>
            <person name="Moseman B.L."/>
            <person name="Mundt M."/>
            <person name="Munk A.C."/>
            <person name="Okinaka R.T."/>
            <person name="Parson-Quintana B."/>
            <person name="Reilly L.P."/>
            <person name="Richardson P."/>
            <person name="Robinson D.L."/>
            <person name="Rubin E."/>
            <person name="Saunders E."/>
            <person name="Tapia R."/>
            <person name="Tesmer J.G."/>
            <person name="Thayer N."/>
            <person name="Thompson L.S."/>
            <person name="Tice H."/>
            <person name="Ticknor L.O."/>
            <person name="Wills P.L."/>
            <person name="Brettin T.S."/>
            <person name="Gilna P."/>
        </authorList>
    </citation>
    <scope>NUCLEOTIDE SEQUENCE [LARGE SCALE GENOMIC DNA]</scope>
    <source>
        <strain>97-27</strain>
    </source>
</reference>
<feature type="chain" id="PRO_0000162318" description="Small, acid-soluble spore protein H">
    <location>
        <begin position="1"/>
        <end position="59"/>
    </location>
</feature>
<evidence type="ECO:0000255" key="1">
    <source>
        <dbReference type="HAMAP-Rule" id="MF_00667"/>
    </source>
</evidence>
<evidence type="ECO:0000305" key="2"/>
<proteinExistence type="inferred from homology"/>
<comment type="subcellular location">
    <subcellularLocation>
        <location evidence="1">Spore core</location>
    </subcellularLocation>
</comment>
<comment type="induction">
    <text evidence="1">Expressed only in the forespore compartment of sporulating cells.</text>
</comment>
<comment type="similarity">
    <text evidence="1">Belongs to the SspH family.</text>
</comment>
<comment type="sequence caution" evidence="2">
    <conflict type="erroneous initiation">
        <sequence resource="EMBL-CDS" id="AAT62400"/>
    </conflict>
</comment>
<accession>Q6HNK1</accession>
<protein>
    <recommendedName>
        <fullName evidence="1">Small, acid-soluble spore protein H</fullName>
        <shortName evidence="1">SASP H</shortName>
    </recommendedName>
</protein>
<gene>
    <name evidence="1" type="primary">sspH</name>
    <name type="ordered locus">BT9727_0523</name>
</gene>
<sequence>MDVKRVKQILSSSSRIDVTYEGVPVWIESCDEQSGVAQVYDVSNPGESVHVNVTALEEK</sequence>
<name>SSPH_BACHK</name>